<reference key="1">
    <citation type="journal article" date="2008" name="BMC Genomics">
        <title>Complete genome of Phenylobacterium zucineum - a novel facultative intracellular bacterium isolated from human erythroleukemia cell line K562.</title>
        <authorList>
            <person name="Luo Y."/>
            <person name="Xu X."/>
            <person name="Ding Z."/>
            <person name="Liu Z."/>
            <person name="Zhang B."/>
            <person name="Yan Z."/>
            <person name="Sun J."/>
            <person name="Hu S."/>
            <person name="Hu X."/>
        </authorList>
    </citation>
    <scope>NUCLEOTIDE SEQUENCE [LARGE SCALE GENOMIC DNA]</scope>
    <source>
        <strain>HLK1</strain>
    </source>
</reference>
<gene>
    <name evidence="1" type="primary">lpxD</name>
    <name type="ordered locus">PHZ_c1770</name>
</gene>
<proteinExistence type="inferred from homology"/>
<sequence length="343" mass="34749">MPDPRFYEDLGPVPLAELAKLGGADLPAGADGARLIRAAAVLAHAGPDTVTFLTDRKHLPGLARLEGACFVQARDASVLPDGCIPLVTRNPHGAYALAAQTLHRPRAVGSDAIAPDVVLEPGVELGAGVVLGPGVKVGRGTRIGPNAVVGAGVAIGRECDIGANVTLGFALLGDRVRILAGAVIGEPGFGATAGAQGLIDIPQLGRVIIQDGVTIGANTTIDRGAFDDTVIGENTKIDNLVQIAHNVRVGRNCVMAAHTGISGSVEIGEGAQFGGRAGVADHVTIGAGARVGAAAGVMKDIPAGETWGGMPARPIRHWLKETAWLARMANRRGPDGKGAGNDA</sequence>
<dbReference type="EC" id="2.3.1.191" evidence="1"/>
<dbReference type="EMBL" id="CP000747">
    <property type="protein sequence ID" value="ACG78181.1"/>
    <property type="molecule type" value="Genomic_DNA"/>
</dbReference>
<dbReference type="RefSeq" id="WP_012522323.1">
    <property type="nucleotide sequence ID" value="NC_011144.1"/>
</dbReference>
<dbReference type="SMR" id="B4RBY4"/>
<dbReference type="STRING" id="450851.PHZ_c1770"/>
<dbReference type="KEGG" id="pzu:PHZ_c1770"/>
<dbReference type="eggNOG" id="COG1044">
    <property type="taxonomic scope" value="Bacteria"/>
</dbReference>
<dbReference type="HOGENOM" id="CLU_049865_0_2_5"/>
<dbReference type="OrthoDB" id="9784739at2"/>
<dbReference type="UniPathway" id="UPA00973"/>
<dbReference type="Proteomes" id="UP000001868">
    <property type="component" value="Chromosome"/>
</dbReference>
<dbReference type="GO" id="GO:0016020">
    <property type="term" value="C:membrane"/>
    <property type="evidence" value="ECO:0007669"/>
    <property type="project" value="GOC"/>
</dbReference>
<dbReference type="GO" id="GO:0016410">
    <property type="term" value="F:N-acyltransferase activity"/>
    <property type="evidence" value="ECO:0007669"/>
    <property type="project" value="InterPro"/>
</dbReference>
<dbReference type="GO" id="GO:0009245">
    <property type="term" value="P:lipid A biosynthetic process"/>
    <property type="evidence" value="ECO:0007669"/>
    <property type="project" value="UniProtKB-UniRule"/>
</dbReference>
<dbReference type="CDD" id="cd03352">
    <property type="entry name" value="LbH_LpxD"/>
    <property type="match status" value="1"/>
</dbReference>
<dbReference type="Gene3D" id="2.160.10.10">
    <property type="entry name" value="Hexapeptide repeat proteins"/>
    <property type="match status" value="1"/>
</dbReference>
<dbReference type="Gene3D" id="3.40.1390.10">
    <property type="entry name" value="MurE/MurF, N-terminal domain"/>
    <property type="match status" value="1"/>
</dbReference>
<dbReference type="HAMAP" id="MF_00523">
    <property type="entry name" value="LpxD"/>
    <property type="match status" value="1"/>
</dbReference>
<dbReference type="InterPro" id="IPR001451">
    <property type="entry name" value="Hexapep"/>
</dbReference>
<dbReference type="InterPro" id="IPR018357">
    <property type="entry name" value="Hexapep_transf_CS"/>
</dbReference>
<dbReference type="InterPro" id="IPR007691">
    <property type="entry name" value="LpxD"/>
</dbReference>
<dbReference type="InterPro" id="IPR011004">
    <property type="entry name" value="Trimer_LpxA-like_sf"/>
</dbReference>
<dbReference type="InterPro" id="IPR020573">
    <property type="entry name" value="UDP_GlcNAc_AcTrfase_non-rep"/>
</dbReference>
<dbReference type="NCBIfam" id="TIGR01853">
    <property type="entry name" value="lipid_A_lpxD"/>
    <property type="match status" value="1"/>
</dbReference>
<dbReference type="NCBIfam" id="NF002060">
    <property type="entry name" value="PRK00892.1"/>
    <property type="match status" value="1"/>
</dbReference>
<dbReference type="PANTHER" id="PTHR43378">
    <property type="entry name" value="UDP-3-O-ACYLGLUCOSAMINE N-ACYLTRANSFERASE"/>
    <property type="match status" value="1"/>
</dbReference>
<dbReference type="PANTHER" id="PTHR43378:SF2">
    <property type="entry name" value="UDP-3-O-ACYLGLUCOSAMINE N-ACYLTRANSFERASE 1, MITOCHONDRIAL-RELATED"/>
    <property type="match status" value="1"/>
</dbReference>
<dbReference type="Pfam" id="PF00132">
    <property type="entry name" value="Hexapep"/>
    <property type="match status" value="2"/>
</dbReference>
<dbReference type="Pfam" id="PF04613">
    <property type="entry name" value="LpxD"/>
    <property type="match status" value="1"/>
</dbReference>
<dbReference type="SUPFAM" id="SSF51161">
    <property type="entry name" value="Trimeric LpxA-like enzymes"/>
    <property type="match status" value="1"/>
</dbReference>
<dbReference type="PROSITE" id="PS00101">
    <property type="entry name" value="HEXAPEP_TRANSFERASES"/>
    <property type="match status" value="1"/>
</dbReference>
<evidence type="ECO:0000255" key="1">
    <source>
        <dbReference type="HAMAP-Rule" id="MF_00523"/>
    </source>
</evidence>
<comment type="function">
    <text evidence="1">Catalyzes the N-acylation of UDP-3-O-acylglucosamine using 3-hydroxyacyl-ACP as the acyl donor. Is involved in the biosynthesis of lipid A, a phosphorylated glycolipid that anchors the lipopolysaccharide to the outer membrane of the cell.</text>
</comment>
<comment type="catalytic activity">
    <reaction evidence="1">
        <text>a UDP-3-O-[(3R)-3-hydroxyacyl]-alpha-D-glucosamine + a (3R)-hydroxyacyl-[ACP] = a UDP-2-N,3-O-bis[(3R)-3-hydroxyacyl]-alpha-D-glucosamine + holo-[ACP] + H(+)</text>
        <dbReference type="Rhea" id="RHEA:53836"/>
        <dbReference type="Rhea" id="RHEA-COMP:9685"/>
        <dbReference type="Rhea" id="RHEA-COMP:9945"/>
        <dbReference type="ChEBI" id="CHEBI:15378"/>
        <dbReference type="ChEBI" id="CHEBI:64479"/>
        <dbReference type="ChEBI" id="CHEBI:78827"/>
        <dbReference type="ChEBI" id="CHEBI:137740"/>
        <dbReference type="ChEBI" id="CHEBI:137748"/>
        <dbReference type="EC" id="2.3.1.191"/>
    </reaction>
</comment>
<comment type="pathway">
    <text evidence="1">Bacterial outer membrane biogenesis; LPS lipid A biosynthesis.</text>
</comment>
<comment type="subunit">
    <text evidence="1">Homotrimer.</text>
</comment>
<comment type="similarity">
    <text evidence="1">Belongs to the transferase hexapeptide repeat family. LpxD subfamily.</text>
</comment>
<name>LPXD_PHEZH</name>
<organism>
    <name type="scientific">Phenylobacterium zucineum (strain HLK1)</name>
    <dbReference type="NCBI Taxonomy" id="450851"/>
    <lineage>
        <taxon>Bacteria</taxon>
        <taxon>Pseudomonadati</taxon>
        <taxon>Pseudomonadota</taxon>
        <taxon>Alphaproteobacteria</taxon>
        <taxon>Caulobacterales</taxon>
        <taxon>Caulobacteraceae</taxon>
        <taxon>Phenylobacterium</taxon>
    </lineage>
</organism>
<keyword id="KW-0012">Acyltransferase</keyword>
<keyword id="KW-0441">Lipid A biosynthesis</keyword>
<keyword id="KW-0444">Lipid biosynthesis</keyword>
<keyword id="KW-0443">Lipid metabolism</keyword>
<keyword id="KW-1185">Reference proteome</keyword>
<keyword id="KW-0677">Repeat</keyword>
<keyword id="KW-0808">Transferase</keyword>
<protein>
    <recommendedName>
        <fullName evidence="1">UDP-3-O-acylglucosamine N-acyltransferase</fullName>
        <ecNumber evidence="1">2.3.1.191</ecNumber>
    </recommendedName>
</protein>
<accession>B4RBY4</accession>
<feature type="chain" id="PRO_1000127690" description="UDP-3-O-acylglucosamine N-acyltransferase">
    <location>
        <begin position="1"/>
        <end position="343"/>
    </location>
</feature>
<feature type="active site" description="Proton acceptor" evidence="1">
    <location>
        <position position="245"/>
    </location>
</feature>